<comment type="function">
    <text evidence="1">Catalyzes the conversion of dethiobiotin (DTB) to biotin by the insertion of a sulfur atom into dethiobiotin via a radical-based mechanism.</text>
</comment>
<comment type="catalytic activity">
    <reaction evidence="1">
        <text>(4R,5S)-dethiobiotin + (sulfur carrier)-SH + 2 reduced [2Fe-2S]-[ferredoxin] + 2 S-adenosyl-L-methionine = (sulfur carrier)-H + biotin + 2 5'-deoxyadenosine + 2 L-methionine + 2 oxidized [2Fe-2S]-[ferredoxin]</text>
        <dbReference type="Rhea" id="RHEA:22060"/>
        <dbReference type="Rhea" id="RHEA-COMP:10000"/>
        <dbReference type="Rhea" id="RHEA-COMP:10001"/>
        <dbReference type="Rhea" id="RHEA-COMP:14737"/>
        <dbReference type="Rhea" id="RHEA-COMP:14739"/>
        <dbReference type="ChEBI" id="CHEBI:17319"/>
        <dbReference type="ChEBI" id="CHEBI:29917"/>
        <dbReference type="ChEBI" id="CHEBI:33737"/>
        <dbReference type="ChEBI" id="CHEBI:33738"/>
        <dbReference type="ChEBI" id="CHEBI:57586"/>
        <dbReference type="ChEBI" id="CHEBI:57844"/>
        <dbReference type="ChEBI" id="CHEBI:59789"/>
        <dbReference type="ChEBI" id="CHEBI:64428"/>
        <dbReference type="ChEBI" id="CHEBI:149473"/>
        <dbReference type="EC" id="2.8.1.6"/>
    </reaction>
</comment>
<comment type="cofactor">
    <cofactor evidence="1">
        <name>[4Fe-4S] cluster</name>
        <dbReference type="ChEBI" id="CHEBI:49883"/>
    </cofactor>
    <text evidence="1">Binds 1 [4Fe-4S] cluster. The cluster is coordinated with 3 cysteines and an exchangeable S-adenosyl-L-methionine.</text>
</comment>
<comment type="cofactor">
    <cofactor evidence="1">
        <name>[2Fe-2S] cluster</name>
        <dbReference type="ChEBI" id="CHEBI:190135"/>
    </cofactor>
    <text evidence="1">Binds 1 [2Fe-2S] cluster. The cluster is coordinated with 3 cysteines and 1 arginine.</text>
</comment>
<comment type="pathway">
    <text evidence="1">Cofactor biosynthesis; biotin biosynthesis; biotin from 7,8-diaminononanoate: step 2/2.</text>
</comment>
<comment type="subunit">
    <text evidence="1">Homodimer.</text>
</comment>
<comment type="similarity">
    <text evidence="1">Belongs to the radical SAM superfamily. Biotin synthase family.</text>
</comment>
<dbReference type="EC" id="2.8.1.6" evidence="1"/>
<dbReference type="EMBL" id="CP001078">
    <property type="protein sequence ID" value="ACD51519.1"/>
    <property type="molecule type" value="Genomic_DNA"/>
</dbReference>
<dbReference type="SMR" id="B2V167"/>
<dbReference type="KEGG" id="cbt:CLH_0685"/>
<dbReference type="HOGENOM" id="CLU_033172_2_1_9"/>
<dbReference type="UniPathway" id="UPA00078">
    <property type="reaction ID" value="UER00162"/>
</dbReference>
<dbReference type="GO" id="GO:0051537">
    <property type="term" value="F:2 iron, 2 sulfur cluster binding"/>
    <property type="evidence" value="ECO:0007669"/>
    <property type="project" value="UniProtKB-KW"/>
</dbReference>
<dbReference type="GO" id="GO:0051539">
    <property type="term" value="F:4 iron, 4 sulfur cluster binding"/>
    <property type="evidence" value="ECO:0007669"/>
    <property type="project" value="UniProtKB-KW"/>
</dbReference>
<dbReference type="GO" id="GO:0004076">
    <property type="term" value="F:biotin synthase activity"/>
    <property type="evidence" value="ECO:0007669"/>
    <property type="project" value="UniProtKB-UniRule"/>
</dbReference>
<dbReference type="GO" id="GO:0005506">
    <property type="term" value="F:iron ion binding"/>
    <property type="evidence" value="ECO:0007669"/>
    <property type="project" value="UniProtKB-UniRule"/>
</dbReference>
<dbReference type="GO" id="GO:0009102">
    <property type="term" value="P:biotin biosynthetic process"/>
    <property type="evidence" value="ECO:0007669"/>
    <property type="project" value="UniProtKB-UniRule"/>
</dbReference>
<dbReference type="CDD" id="cd01335">
    <property type="entry name" value="Radical_SAM"/>
    <property type="match status" value="1"/>
</dbReference>
<dbReference type="FunFam" id="3.20.20.70:FF:000026">
    <property type="entry name" value="Biotin synthase"/>
    <property type="match status" value="1"/>
</dbReference>
<dbReference type="Gene3D" id="3.20.20.70">
    <property type="entry name" value="Aldolase class I"/>
    <property type="match status" value="1"/>
</dbReference>
<dbReference type="HAMAP" id="MF_01694">
    <property type="entry name" value="BioB"/>
    <property type="match status" value="1"/>
</dbReference>
<dbReference type="InterPro" id="IPR013785">
    <property type="entry name" value="Aldolase_TIM"/>
</dbReference>
<dbReference type="InterPro" id="IPR010722">
    <property type="entry name" value="BATS_dom"/>
</dbReference>
<dbReference type="InterPro" id="IPR002684">
    <property type="entry name" value="Biotin_synth/BioAB"/>
</dbReference>
<dbReference type="InterPro" id="IPR024177">
    <property type="entry name" value="Biotin_synthase"/>
</dbReference>
<dbReference type="InterPro" id="IPR006638">
    <property type="entry name" value="Elp3/MiaA/NifB-like_rSAM"/>
</dbReference>
<dbReference type="InterPro" id="IPR007197">
    <property type="entry name" value="rSAM"/>
</dbReference>
<dbReference type="NCBIfam" id="TIGR00433">
    <property type="entry name" value="bioB"/>
    <property type="match status" value="1"/>
</dbReference>
<dbReference type="PANTHER" id="PTHR22976">
    <property type="entry name" value="BIOTIN SYNTHASE"/>
    <property type="match status" value="1"/>
</dbReference>
<dbReference type="PANTHER" id="PTHR22976:SF2">
    <property type="entry name" value="BIOTIN SYNTHASE, MITOCHONDRIAL"/>
    <property type="match status" value="1"/>
</dbReference>
<dbReference type="Pfam" id="PF06968">
    <property type="entry name" value="BATS"/>
    <property type="match status" value="1"/>
</dbReference>
<dbReference type="Pfam" id="PF04055">
    <property type="entry name" value="Radical_SAM"/>
    <property type="match status" value="1"/>
</dbReference>
<dbReference type="PIRSF" id="PIRSF001619">
    <property type="entry name" value="Biotin_synth"/>
    <property type="match status" value="1"/>
</dbReference>
<dbReference type="SFLD" id="SFLDG01060">
    <property type="entry name" value="BATS_domain_containing"/>
    <property type="match status" value="1"/>
</dbReference>
<dbReference type="SFLD" id="SFLDG01278">
    <property type="entry name" value="biotin_synthase_like"/>
    <property type="match status" value="1"/>
</dbReference>
<dbReference type="SMART" id="SM00876">
    <property type="entry name" value="BATS"/>
    <property type="match status" value="1"/>
</dbReference>
<dbReference type="SMART" id="SM00729">
    <property type="entry name" value="Elp3"/>
    <property type="match status" value="1"/>
</dbReference>
<dbReference type="SUPFAM" id="SSF102114">
    <property type="entry name" value="Radical SAM enzymes"/>
    <property type="match status" value="1"/>
</dbReference>
<dbReference type="PROSITE" id="PS51918">
    <property type="entry name" value="RADICAL_SAM"/>
    <property type="match status" value="1"/>
</dbReference>
<feature type="chain" id="PRO_0000381311" description="Biotin synthase">
    <location>
        <begin position="1"/>
        <end position="318"/>
    </location>
</feature>
<feature type="domain" description="Radical SAM core" evidence="2">
    <location>
        <begin position="44"/>
        <end position="273"/>
    </location>
</feature>
<feature type="binding site" evidence="1">
    <location>
        <position position="62"/>
    </location>
    <ligand>
        <name>[4Fe-4S] cluster</name>
        <dbReference type="ChEBI" id="CHEBI:49883"/>
        <note>4Fe-4S-S-AdoMet</note>
    </ligand>
</feature>
<feature type="binding site" evidence="1">
    <location>
        <position position="66"/>
    </location>
    <ligand>
        <name>[4Fe-4S] cluster</name>
        <dbReference type="ChEBI" id="CHEBI:49883"/>
        <note>4Fe-4S-S-AdoMet</note>
    </ligand>
</feature>
<feature type="binding site" evidence="1">
    <location>
        <position position="69"/>
    </location>
    <ligand>
        <name>[4Fe-4S] cluster</name>
        <dbReference type="ChEBI" id="CHEBI:49883"/>
        <note>4Fe-4S-S-AdoMet</note>
    </ligand>
</feature>
<feature type="binding site" evidence="1">
    <location>
        <position position="106"/>
    </location>
    <ligand>
        <name>[2Fe-2S] cluster</name>
        <dbReference type="ChEBI" id="CHEBI:190135"/>
    </ligand>
</feature>
<feature type="binding site" evidence="1">
    <location>
        <position position="138"/>
    </location>
    <ligand>
        <name>[2Fe-2S] cluster</name>
        <dbReference type="ChEBI" id="CHEBI:190135"/>
    </ligand>
</feature>
<feature type="binding site" evidence="1">
    <location>
        <position position="198"/>
    </location>
    <ligand>
        <name>[2Fe-2S] cluster</name>
        <dbReference type="ChEBI" id="CHEBI:190135"/>
    </ligand>
</feature>
<feature type="binding site" evidence="1">
    <location>
        <position position="268"/>
    </location>
    <ligand>
        <name>[2Fe-2S] cluster</name>
        <dbReference type="ChEBI" id="CHEBI:190135"/>
    </ligand>
</feature>
<organism>
    <name type="scientific">Clostridium botulinum (strain Alaska E43 / Type E3)</name>
    <dbReference type="NCBI Taxonomy" id="508767"/>
    <lineage>
        <taxon>Bacteria</taxon>
        <taxon>Bacillati</taxon>
        <taxon>Bacillota</taxon>
        <taxon>Clostridia</taxon>
        <taxon>Eubacteriales</taxon>
        <taxon>Clostridiaceae</taxon>
        <taxon>Clostridium</taxon>
    </lineage>
</organism>
<reference key="1">
    <citation type="submission" date="2008-05" db="EMBL/GenBank/DDBJ databases">
        <title>Complete genome sequence of Clostridium botulinum E3 str. Alaska E43.</title>
        <authorList>
            <person name="Brinkac L.M."/>
            <person name="Brown J.L."/>
            <person name="Bruce D."/>
            <person name="Detter C."/>
            <person name="Munk C."/>
            <person name="Smith L.A."/>
            <person name="Smith T.J."/>
            <person name="Sutton G."/>
            <person name="Brettin T.S."/>
        </authorList>
    </citation>
    <scope>NUCLEOTIDE SEQUENCE [LARGE SCALE GENOMIC DNA]</scope>
    <source>
        <strain>Alaska E43 / Type E3</strain>
    </source>
</reference>
<protein>
    <recommendedName>
        <fullName evidence="1">Biotin synthase</fullName>
        <ecNumber evidence="1">2.8.1.6</ecNumber>
    </recommendedName>
</protein>
<sequence>MNIIDRFKEKILSGELISKKEAIILSKENVDKLASAANDIRMSLCGKKFNLCTIINGKSGRCGENCKYCAQSVYFKTDIEEYNLLDSESIITSAISNYNSGVHRFSVVTSGKKLTNKEIDIVCKTYSEVQEKCAIKLCASHGLLNYEELVKLKESGVIRYHNNLETSRRFFSNICTTHTFDEKINTIKNALKAGLQVCSGGIIGLGETMEDRIDMAFTLRELNVDSIPINILNPIKGTALENQEKLSYDEITKTFALFRFILPEKQIRLAGGRALLNDKGERLMKSGVNSAISGDMLTTSGIKTFDDIKMIKELGFEV</sequence>
<gene>
    <name evidence="1" type="primary">bioB</name>
    <name type="ordered locus">CLH_0685</name>
</gene>
<accession>B2V167</accession>
<evidence type="ECO:0000255" key="1">
    <source>
        <dbReference type="HAMAP-Rule" id="MF_01694"/>
    </source>
</evidence>
<evidence type="ECO:0000255" key="2">
    <source>
        <dbReference type="PROSITE-ProRule" id="PRU01266"/>
    </source>
</evidence>
<keyword id="KW-0001">2Fe-2S</keyword>
<keyword id="KW-0004">4Fe-4S</keyword>
<keyword id="KW-0093">Biotin biosynthesis</keyword>
<keyword id="KW-0408">Iron</keyword>
<keyword id="KW-0411">Iron-sulfur</keyword>
<keyword id="KW-0479">Metal-binding</keyword>
<keyword id="KW-0949">S-adenosyl-L-methionine</keyword>
<keyword id="KW-0808">Transferase</keyword>
<proteinExistence type="inferred from homology"/>
<name>BIOB_CLOBA</name>